<keyword id="KW-0067">ATP-binding</keyword>
<keyword id="KW-0997">Cell inner membrane</keyword>
<keyword id="KW-1003">Cell membrane</keyword>
<keyword id="KW-0472">Membrane</keyword>
<keyword id="KW-0547">Nucleotide-binding</keyword>
<keyword id="KW-1185">Reference proteome</keyword>
<keyword id="KW-1278">Translocase</keyword>
<keyword id="KW-0813">Transport</keyword>
<feature type="chain" id="PRO_0000274465" description="Thiamine import ATP-binding protein ThiQ">
    <location>
        <begin position="1"/>
        <end position="238"/>
    </location>
</feature>
<feature type="domain" description="ABC transporter" evidence="1">
    <location>
        <begin position="2"/>
        <end position="230"/>
    </location>
</feature>
<feature type="binding site" evidence="1">
    <location>
        <begin position="32"/>
        <end position="39"/>
    </location>
    <ligand>
        <name>ATP</name>
        <dbReference type="ChEBI" id="CHEBI:30616"/>
    </ligand>
</feature>
<organism>
    <name type="scientific">Vibrio cholerae serotype O1 (strain ATCC 39315 / El Tor Inaba N16961)</name>
    <dbReference type="NCBI Taxonomy" id="243277"/>
    <lineage>
        <taxon>Bacteria</taxon>
        <taxon>Pseudomonadati</taxon>
        <taxon>Pseudomonadota</taxon>
        <taxon>Gammaproteobacteria</taxon>
        <taxon>Vibrionales</taxon>
        <taxon>Vibrionaceae</taxon>
        <taxon>Vibrio</taxon>
    </lineage>
</organism>
<sequence>MLALDKVRYEYEHEWFEFDLNVADGDIVALMGPSGAGKSTLLSLVAGFIEPVSGSIKVNDQSVLGLAPYQRPFSMLFQEHNLFAHLTVRENIGLGLHPGLKLNAEQKQQVVDAAQQVGIADYLDRLPEQLSGGQRQRVALARCFVQPNPIWLLDEPFSALDPLLREEMLALVKQLASERQRTVVMVTHHLSDARAIASQIAFLSQGKVKVVSDCQAVTAQHPHPELAQFVAAALNEPK</sequence>
<gene>
    <name evidence="1" type="primary">thiQ</name>
    <name type="ordered locus">VC_2537</name>
</gene>
<dbReference type="EC" id="7.6.2.15" evidence="1"/>
<dbReference type="EMBL" id="AE003852">
    <property type="protein sequence ID" value="AAF95678.1"/>
    <property type="status" value="ALT_INIT"/>
    <property type="molecule type" value="Genomic_DNA"/>
</dbReference>
<dbReference type="PIR" id="C82063">
    <property type="entry name" value="C82063"/>
</dbReference>
<dbReference type="RefSeq" id="NP_232165.1">
    <property type="nucleotide sequence ID" value="NC_002505.1"/>
</dbReference>
<dbReference type="RefSeq" id="WP_000880286.1">
    <property type="nucleotide sequence ID" value="NZ_LT906614.1"/>
</dbReference>
<dbReference type="SMR" id="Q9KP42"/>
<dbReference type="STRING" id="243277.VC_2537"/>
<dbReference type="DNASU" id="2615554"/>
<dbReference type="EnsemblBacteria" id="AAF95678">
    <property type="protein sequence ID" value="AAF95678"/>
    <property type="gene ID" value="VC_2537"/>
</dbReference>
<dbReference type="KEGG" id="vch:VC_2537"/>
<dbReference type="PATRIC" id="fig|243277.26.peg.2416"/>
<dbReference type="eggNOG" id="COG3840">
    <property type="taxonomic scope" value="Bacteria"/>
</dbReference>
<dbReference type="HOGENOM" id="CLU_000604_1_22_6"/>
<dbReference type="Proteomes" id="UP000000584">
    <property type="component" value="Chromosome 1"/>
</dbReference>
<dbReference type="GO" id="GO:0005886">
    <property type="term" value="C:plasma membrane"/>
    <property type="evidence" value="ECO:0007669"/>
    <property type="project" value="UniProtKB-SubCell"/>
</dbReference>
<dbReference type="GO" id="GO:0048502">
    <property type="term" value="F:ABC-type thiamine transporter activity"/>
    <property type="evidence" value="ECO:0007669"/>
    <property type="project" value="UniProtKB-EC"/>
</dbReference>
<dbReference type="GO" id="GO:0005524">
    <property type="term" value="F:ATP binding"/>
    <property type="evidence" value="ECO:0007669"/>
    <property type="project" value="UniProtKB-KW"/>
</dbReference>
<dbReference type="GO" id="GO:0016887">
    <property type="term" value="F:ATP hydrolysis activity"/>
    <property type="evidence" value="ECO:0007669"/>
    <property type="project" value="InterPro"/>
</dbReference>
<dbReference type="FunFam" id="3.40.50.300:FF:001071">
    <property type="entry name" value="Thiamine import ATP-binding protein ThiQ"/>
    <property type="match status" value="1"/>
</dbReference>
<dbReference type="Gene3D" id="3.40.50.300">
    <property type="entry name" value="P-loop containing nucleotide triphosphate hydrolases"/>
    <property type="match status" value="1"/>
</dbReference>
<dbReference type="InterPro" id="IPR003593">
    <property type="entry name" value="AAA+_ATPase"/>
</dbReference>
<dbReference type="InterPro" id="IPR050093">
    <property type="entry name" value="ABC_SmlMolc_Importer"/>
</dbReference>
<dbReference type="InterPro" id="IPR003439">
    <property type="entry name" value="ABC_transporter-like_ATP-bd"/>
</dbReference>
<dbReference type="InterPro" id="IPR017871">
    <property type="entry name" value="ABC_transporter-like_CS"/>
</dbReference>
<dbReference type="InterPro" id="IPR027417">
    <property type="entry name" value="P-loop_NTPase"/>
</dbReference>
<dbReference type="InterPro" id="IPR005968">
    <property type="entry name" value="Thiamine_ABC_ThiQ"/>
</dbReference>
<dbReference type="NCBIfam" id="TIGR01277">
    <property type="entry name" value="thiQ"/>
    <property type="match status" value="1"/>
</dbReference>
<dbReference type="PANTHER" id="PTHR42781">
    <property type="entry name" value="SPERMIDINE/PUTRESCINE IMPORT ATP-BINDING PROTEIN POTA"/>
    <property type="match status" value="1"/>
</dbReference>
<dbReference type="PANTHER" id="PTHR42781:SF1">
    <property type="entry name" value="THIAMINE IMPORT ATP-BINDING PROTEIN THIQ"/>
    <property type="match status" value="1"/>
</dbReference>
<dbReference type="Pfam" id="PF00005">
    <property type="entry name" value="ABC_tran"/>
    <property type="match status" value="1"/>
</dbReference>
<dbReference type="SMART" id="SM00382">
    <property type="entry name" value="AAA"/>
    <property type="match status" value="1"/>
</dbReference>
<dbReference type="SUPFAM" id="SSF52540">
    <property type="entry name" value="P-loop containing nucleoside triphosphate hydrolases"/>
    <property type="match status" value="1"/>
</dbReference>
<dbReference type="PROSITE" id="PS00211">
    <property type="entry name" value="ABC_TRANSPORTER_1"/>
    <property type="match status" value="1"/>
</dbReference>
<dbReference type="PROSITE" id="PS50893">
    <property type="entry name" value="ABC_TRANSPORTER_2"/>
    <property type="match status" value="1"/>
</dbReference>
<dbReference type="PROSITE" id="PS51288">
    <property type="entry name" value="THIQ"/>
    <property type="match status" value="1"/>
</dbReference>
<accession>Q9KP42</accession>
<protein>
    <recommendedName>
        <fullName evidence="1">Thiamine import ATP-binding protein ThiQ</fullName>
        <ecNumber evidence="1">7.6.2.15</ecNumber>
    </recommendedName>
</protein>
<proteinExistence type="inferred from homology"/>
<name>THIQ_VIBCH</name>
<comment type="function">
    <text evidence="1">Part of the ABC transporter complex ThiBPQ involved in thiamine import. Responsible for energy coupling to the transport system.</text>
</comment>
<comment type="catalytic activity">
    <reaction evidence="1">
        <text>thiamine(out) + ATP + H2O = thiamine(in) + ADP + phosphate + H(+)</text>
        <dbReference type="Rhea" id="RHEA:29811"/>
        <dbReference type="ChEBI" id="CHEBI:15377"/>
        <dbReference type="ChEBI" id="CHEBI:15378"/>
        <dbReference type="ChEBI" id="CHEBI:18385"/>
        <dbReference type="ChEBI" id="CHEBI:30616"/>
        <dbReference type="ChEBI" id="CHEBI:43474"/>
        <dbReference type="ChEBI" id="CHEBI:456216"/>
        <dbReference type="EC" id="7.6.2.15"/>
    </reaction>
</comment>
<comment type="subunit">
    <text evidence="1">The complex is composed of two ATP-binding proteins (ThiQ), two transmembrane proteins (ThiP) and a solute-binding protein (ThiB).</text>
</comment>
<comment type="subcellular location">
    <subcellularLocation>
        <location evidence="1">Cell inner membrane</location>
        <topology evidence="1">Peripheral membrane protein</topology>
    </subcellularLocation>
</comment>
<comment type="similarity">
    <text evidence="1">Belongs to the ABC transporter superfamily. Thiamine importer (TC 3.A.1.19.1) family.</text>
</comment>
<comment type="sequence caution" evidence="2">
    <conflict type="erroneous initiation">
        <sequence resource="EMBL-CDS" id="AAF95678"/>
    </conflict>
</comment>
<reference key="1">
    <citation type="journal article" date="2000" name="Nature">
        <title>DNA sequence of both chromosomes of the cholera pathogen Vibrio cholerae.</title>
        <authorList>
            <person name="Heidelberg J.F."/>
            <person name="Eisen J.A."/>
            <person name="Nelson W.C."/>
            <person name="Clayton R.A."/>
            <person name="Gwinn M.L."/>
            <person name="Dodson R.J."/>
            <person name="Haft D.H."/>
            <person name="Hickey E.K."/>
            <person name="Peterson J.D."/>
            <person name="Umayam L.A."/>
            <person name="Gill S.R."/>
            <person name="Nelson K.E."/>
            <person name="Read T.D."/>
            <person name="Tettelin H."/>
            <person name="Richardson D.L."/>
            <person name="Ermolaeva M.D."/>
            <person name="Vamathevan J.J."/>
            <person name="Bass S."/>
            <person name="Qin H."/>
            <person name="Dragoi I."/>
            <person name="Sellers P."/>
            <person name="McDonald L.A."/>
            <person name="Utterback T.R."/>
            <person name="Fleischmann R.D."/>
            <person name="Nierman W.C."/>
            <person name="White O."/>
            <person name="Salzberg S.L."/>
            <person name="Smith H.O."/>
            <person name="Colwell R.R."/>
            <person name="Mekalanos J.J."/>
            <person name="Venter J.C."/>
            <person name="Fraser C.M."/>
        </authorList>
    </citation>
    <scope>NUCLEOTIDE SEQUENCE [LARGE SCALE GENOMIC DNA]</scope>
    <source>
        <strain>ATCC 39315 / El Tor Inaba N16961</strain>
    </source>
</reference>
<evidence type="ECO:0000255" key="1">
    <source>
        <dbReference type="HAMAP-Rule" id="MF_01723"/>
    </source>
</evidence>
<evidence type="ECO:0000305" key="2"/>